<accession>P33768</accession>
<sequence>MEKSKNIWSLILTEIKKELSEEEFYVWFENLCFLESIGDNIKISTPNLFHKNQIEKRFTKKIKEILIKNGYNNIVIVFTNQPPKTHSNKQETKNPALNETFSKFDKLKEKTTSKEAIQNIQDRIKMYIKKEEEEPTNFKNPFLKKRYTFENFIIGPNNKLAYNASLSISKNPGKKYNPCLIYGGVGLGKTHLLQSIGNKTEELHHNLKILYVTAENFLNEFVESIKTHETKKFKKKYRYLDMLLIDDIHDLQKKEGIQEELFHTFNALYEDNKQLVFTCDRSPSELTNFTDRLKSRFTRGLNVDISKPNFELRAAIVEKKAEEDGINVPKNILNLVAQKVTTNVRDLEAAVTKLKAYIDLDNIEIDIEIVEKIIKEIIIYEKETTNEPNNKINIENIKKILLRELKITHKDIEGHSKKPEITKARHIYAYLLRNFTELSTVEIGKIIGGKTHSTVLYSINKIDRDRNNDKEINNLITELMNKIKKN</sequence>
<proteinExistence type="evidence at protein level"/>
<name>DNAA_BORBU</name>
<comment type="function">
    <text evidence="1">Plays an essential role in the initiation and regulation of chromosomal replication. ATP-DnaA binds to the origin of replication (oriC) to initiate formation of the DNA replication initiation complex once per cell cycle. Binds the DnaA box (a 9 base pair repeat at the origin) and separates the double-stranded (ds)DNA. Forms a right-handed helical filament on oriC DNA; dsDNA binds to the exterior of the filament while single-stranded (ss)DNA is stabiized in the filament's interior. The ATP-DnaA-oriC complex binds and stabilizes one strand of the AT-rich DNA unwinding element (DUE), permitting loading of DNA polymerase. After initiation quickly degrades to an ADP-DnaA complex that is not apt for DNA replication. Binds acidic phospholipids.</text>
</comment>
<comment type="function">
    <text evidence="2">Binds to the bpuR promoter, possibly at 5'-TTTTTAAA-3' (PubMed:31240776).</text>
</comment>
<comment type="subunit">
    <text evidence="1">Oligomerizes as a right-handed, spiral filament on DNA at oriC.</text>
</comment>
<comment type="subcellular location">
    <subcellularLocation>
        <location evidence="1">Cytoplasm</location>
    </subcellularLocation>
</comment>
<comment type="domain">
    <text evidence="1">Domain I is involved in oligomerization and binding regulators, domain II is flexibile and of varying length in different bacteria, domain III forms the AAA+ region, while domain IV binds dsDNA.</text>
</comment>
<comment type="similarity">
    <text evidence="1">Belongs to the DnaA family.</text>
</comment>
<protein>
    <recommendedName>
        <fullName evidence="1">Chromosomal replication initiator protein DnaA</fullName>
    </recommendedName>
</protein>
<reference key="1">
    <citation type="journal article" date="1993" name="FEMS Microbiol. Lett.">
        <title>Unique genetic arrangement in the dnaA region of the Borrelia burgdorferi linear chromosome: nucleotide sequence of the dnaA gene.</title>
        <authorList>
            <person name="Old I.G."/>
            <person name="Margarita D."/>
            <person name="Saint-Girons I."/>
        </authorList>
    </citation>
    <scope>NUCLEOTIDE SEQUENCE [GENOMIC DNA]</scope>
    <source>
        <strain>212</strain>
    </source>
</reference>
<reference key="2">
    <citation type="journal article" date="1997" name="Nature">
        <title>Genomic sequence of a Lyme disease spirochaete, Borrelia burgdorferi.</title>
        <authorList>
            <person name="Fraser C.M."/>
            <person name="Casjens S."/>
            <person name="Huang W.M."/>
            <person name="Sutton G.G."/>
            <person name="Clayton R.A."/>
            <person name="Lathigra R."/>
            <person name="White O."/>
            <person name="Ketchum K.A."/>
            <person name="Dodson R.J."/>
            <person name="Hickey E.K."/>
            <person name="Gwinn M.L."/>
            <person name="Dougherty B.A."/>
            <person name="Tomb J.-F."/>
            <person name="Fleischmann R.D."/>
            <person name="Richardson D.L."/>
            <person name="Peterson J.D."/>
            <person name="Kerlavage A.R."/>
            <person name="Quackenbush J."/>
            <person name="Salzberg S.L."/>
            <person name="Hanson M."/>
            <person name="van Vugt R."/>
            <person name="Palmer N."/>
            <person name="Adams M.D."/>
            <person name="Gocayne J.D."/>
            <person name="Weidman J.F."/>
            <person name="Utterback T.R."/>
            <person name="Watthey L."/>
            <person name="McDonald L.A."/>
            <person name="Artiach P."/>
            <person name="Bowman C."/>
            <person name="Garland S.A."/>
            <person name="Fujii C."/>
            <person name="Cotton M.D."/>
            <person name="Horst K."/>
            <person name="Roberts K.M."/>
            <person name="Hatch B."/>
            <person name="Smith H.O."/>
            <person name="Venter J.C."/>
        </authorList>
    </citation>
    <scope>NUCLEOTIDE SEQUENCE [LARGE SCALE GENOMIC DNA]</scope>
    <source>
        <strain>ATCC 35210 / DSM 4680 / CIP 102532 / B31</strain>
    </source>
</reference>
<reference key="3">
    <citation type="journal article" date="2019" name="Mol. Microbiol.">
        <title>The Lyme disease spirochete's BpuR DNA/RNA-binding protein is differentially expressed during the mammal-tick infectious cycle, which affects translation of the SodA superoxide dismutase.</title>
        <authorList>
            <person name="Jutras B.L."/>
            <person name="Savage C.R."/>
            <person name="Arnold W.K."/>
            <person name="Lethbridge K.G."/>
            <person name="Carroll D.W."/>
            <person name="Tilly K."/>
            <person name="Bestor A."/>
            <person name="Zhu H."/>
            <person name="Seshu J."/>
            <person name="Zueckert W.R."/>
            <person name="Stewart P.E."/>
            <person name="Rosa P.A."/>
            <person name="Brissette C.A."/>
            <person name="Stevenson B."/>
        </authorList>
    </citation>
    <scope>DNA-BINDING</scope>
    <source>
        <strain>ATCC 35210 / DSM 4680 / CIP 102532 / B31</strain>
    </source>
</reference>
<keyword id="KW-0067">ATP-binding</keyword>
<keyword id="KW-0963">Cytoplasm</keyword>
<keyword id="KW-0235">DNA replication</keyword>
<keyword id="KW-0238">DNA-binding</keyword>
<keyword id="KW-0446">Lipid-binding</keyword>
<keyword id="KW-0547">Nucleotide-binding</keyword>
<keyword id="KW-1185">Reference proteome</keyword>
<feature type="chain" id="PRO_0000114140" description="Chromosomal replication initiator protein DnaA">
    <location>
        <begin position="1"/>
        <end position="486"/>
    </location>
</feature>
<feature type="region of interest" description="Domain I, interacts with DnaA modulators" evidence="1">
    <location>
        <begin position="1"/>
        <end position="79"/>
    </location>
</feature>
<feature type="region of interest" description="Domain II" evidence="1">
    <location>
        <begin position="79"/>
        <end position="141"/>
    </location>
</feature>
<feature type="region of interest" description="Domain III, AAA+ region" evidence="1">
    <location>
        <begin position="142"/>
        <end position="358"/>
    </location>
</feature>
<feature type="region of interest" description="Domain IV, binds dsDNA" evidence="1">
    <location>
        <begin position="359"/>
        <end position="486"/>
    </location>
</feature>
<feature type="binding site" evidence="1">
    <location>
        <position position="186"/>
    </location>
    <ligand>
        <name>ATP</name>
        <dbReference type="ChEBI" id="CHEBI:30616"/>
    </ligand>
</feature>
<feature type="binding site" evidence="1">
    <location>
        <position position="188"/>
    </location>
    <ligand>
        <name>ATP</name>
        <dbReference type="ChEBI" id="CHEBI:30616"/>
    </ligand>
</feature>
<feature type="binding site" evidence="1">
    <location>
        <position position="189"/>
    </location>
    <ligand>
        <name>ATP</name>
        <dbReference type="ChEBI" id="CHEBI:30616"/>
    </ligand>
</feature>
<feature type="binding site" evidence="1">
    <location>
        <position position="190"/>
    </location>
    <ligand>
        <name>ATP</name>
        <dbReference type="ChEBI" id="CHEBI:30616"/>
    </ligand>
</feature>
<evidence type="ECO:0000255" key="1">
    <source>
        <dbReference type="HAMAP-Rule" id="MF_00377"/>
    </source>
</evidence>
<evidence type="ECO:0000269" key="2">
    <source>
    </source>
</evidence>
<gene>
    <name evidence="1" type="primary">dnaA</name>
    <name type="ordered locus">BB_0437</name>
</gene>
<dbReference type="EMBL" id="U04527">
    <property type="protein sequence ID" value="AAA58941.1"/>
    <property type="molecule type" value="Genomic_DNA"/>
</dbReference>
<dbReference type="EMBL" id="AE000783">
    <property type="protein sequence ID" value="AAB91515.1"/>
    <property type="molecule type" value="Genomic_DNA"/>
</dbReference>
<dbReference type="PIR" id="D70154">
    <property type="entry name" value="D70154"/>
</dbReference>
<dbReference type="RefSeq" id="NP_212571.1">
    <property type="nucleotide sequence ID" value="NC_001318.1"/>
</dbReference>
<dbReference type="RefSeq" id="WP_002656657.1">
    <property type="nucleotide sequence ID" value="NC_001318.1"/>
</dbReference>
<dbReference type="SMR" id="P33768"/>
<dbReference type="STRING" id="224326.BB_0437"/>
<dbReference type="PaxDb" id="224326-BB_0437"/>
<dbReference type="EnsemblBacteria" id="AAB91515">
    <property type="protein sequence ID" value="AAB91515"/>
    <property type="gene ID" value="BB_0437"/>
</dbReference>
<dbReference type="KEGG" id="bbu:BB_0437"/>
<dbReference type="PATRIC" id="fig|224326.49.peg.828"/>
<dbReference type="HOGENOM" id="CLU_026910_3_1_12"/>
<dbReference type="OrthoDB" id="9807019at2"/>
<dbReference type="Proteomes" id="UP000001807">
    <property type="component" value="Chromosome"/>
</dbReference>
<dbReference type="GO" id="GO:0005737">
    <property type="term" value="C:cytoplasm"/>
    <property type="evidence" value="ECO:0007669"/>
    <property type="project" value="UniProtKB-SubCell"/>
</dbReference>
<dbReference type="GO" id="GO:0005886">
    <property type="term" value="C:plasma membrane"/>
    <property type="evidence" value="ECO:0007669"/>
    <property type="project" value="TreeGrafter"/>
</dbReference>
<dbReference type="GO" id="GO:0005524">
    <property type="term" value="F:ATP binding"/>
    <property type="evidence" value="ECO:0007669"/>
    <property type="project" value="UniProtKB-UniRule"/>
</dbReference>
<dbReference type="GO" id="GO:0016887">
    <property type="term" value="F:ATP hydrolysis activity"/>
    <property type="evidence" value="ECO:0007669"/>
    <property type="project" value="InterPro"/>
</dbReference>
<dbReference type="GO" id="GO:0003688">
    <property type="term" value="F:DNA replication origin binding"/>
    <property type="evidence" value="ECO:0007669"/>
    <property type="project" value="UniProtKB-UniRule"/>
</dbReference>
<dbReference type="GO" id="GO:0008289">
    <property type="term" value="F:lipid binding"/>
    <property type="evidence" value="ECO:0007669"/>
    <property type="project" value="UniProtKB-KW"/>
</dbReference>
<dbReference type="GO" id="GO:0006270">
    <property type="term" value="P:DNA replication initiation"/>
    <property type="evidence" value="ECO:0007669"/>
    <property type="project" value="UniProtKB-UniRule"/>
</dbReference>
<dbReference type="GO" id="GO:0006275">
    <property type="term" value="P:regulation of DNA replication"/>
    <property type="evidence" value="ECO:0007669"/>
    <property type="project" value="UniProtKB-UniRule"/>
</dbReference>
<dbReference type="CDD" id="cd00009">
    <property type="entry name" value="AAA"/>
    <property type="match status" value="1"/>
</dbReference>
<dbReference type="CDD" id="cd06571">
    <property type="entry name" value="Bac_DnaA_C"/>
    <property type="match status" value="1"/>
</dbReference>
<dbReference type="FunFam" id="3.40.50.300:FF:000668">
    <property type="entry name" value="Chromosomal replication initiator protein DnaA"/>
    <property type="match status" value="1"/>
</dbReference>
<dbReference type="Gene3D" id="1.10.1750.10">
    <property type="match status" value="1"/>
</dbReference>
<dbReference type="Gene3D" id="1.10.8.60">
    <property type="match status" value="1"/>
</dbReference>
<dbReference type="Gene3D" id="3.30.300.180">
    <property type="match status" value="1"/>
</dbReference>
<dbReference type="Gene3D" id="3.40.50.300">
    <property type="entry name" value="P-loop containing nucleotide triphosphate hydrolases"/>
    <property type="match status" value="1"/>
</dbReference>
<dbReference type="HAMAP" id="MF_00377">
    <property type="entry name" value="DnaA_bact"/>
    <property type="match status" value="1"/>
</dbReference>
<dbReference type="InterPro" id="IPR003593">
    <property type="entry name" value="AAA+_ATPase"/>
</dbReference>
<dbReference type="InterPro" id="IPR001957">
    <property type="entry name" value="Chromosome_initiator_DnaA"/>
</dbReference>
<dbReference type="InterPro" id="IPR020591">
    <property type="entry name" value="Chromosome_initiator_DnaA-like"/>
</dbReference>
<dbReference type="InterPro" id="IPR018312">
    <property type="entry name" value="Chromosome_initiator_DnaA_CS"/>
</dbReference>
<dbReference type="InterPro" id="IPR013159">
    <property type="entry name" value="DnaA_C"/>
</dbReference>
<dbReference type="InterPro" id="IPR013317">
    <property type="entry name" value="DnaA_dom"/>
</dbReference>
<dbReference type="InterPro" id="IPR024633">
    <property type="entry name" value="DnaA_N_dom"/>
</dbReference>
<dbReference type="InterPro" id="IPR038454">
    <property type="entry name" value="DnaA_N_sf"/>
</dbReference>
<dbReference type="InterPro" id="IPR027417">
    <property type="entry name" value="P-loop_NTPase"/>
</dbReference>
<dbReference type="InterPro" id="IPR010921">
    <property type="entry name" value="Trp_repressor/repl_initiator"/>
</dbReference>
<dbReference type="NCBIfam" id="TIGR00362">
    <property type="entry name" value="DnaA"/>
    <property type="match status" value="1"/>
</dbReference>
<dbReference type="PANTHER" id="PTHR30050">
    <property type="entry name" value="CHROMOSOMAL REPLICATION INITIATOR PROTEIN DNAA"/>
    <property type="match status" value="1"/>
</dbReference>
<dbReference type="PANTHER" id="PTHR30050:SF2">
    <property type="entry name" value="CHROMOSOMAL REPLICATION INITIATOR PROTEIN DNAA"/>
    <property type="match status" value="1"/>
</dbReference>
<dbReference type="Pfam" id="PF00308">
    <property type="entry name" value="Bac_DnaA"/>
    <property type="match status" value="1"/>
</dbReference>
<dbReference type="Pfam" id="PF08299">
    <property type="entry name" value="Bac_DnaA_C"/>
    <property type="match status" value="1"/>
</dbReference>
<dbReference type="Pfam" id="PF11638">
    <property type="entry name" value="DnaA_N"/>
    <property type="match status" value="1"/>
</dbReference>
<dbReference type="PRINTS" id="PR00051">
    <property type="entry name" value="DNAA"/>
</dbReference>
<dbReference type="SMART" id="SM00382">
    <property type="entry name" value="AAA"/>
    <property type="match status" value="1"/>
</dbReference>
<dbReference type="SMART" id="SM00760">
    <property type="entry name" value="Bac_DnaA_C"/>
    <property type="match status" value="1"/>
</dbReference>
<dbReference type="SUPFAM" id="SSF52540">
    <property type="entry name" value="P-loop containing nucleoside triphosphate hydrolases"/>
    <property type="match status" value="1"/>
</dbReference>
<dbReference type="SUPFAM" id="SSF48295">
    <property type="entry name" value="TrpR-like"/>
    <property type="match status" value="1"/>
</dbReference>
<dbReference type="PROSITE" id="PS01008">
    <property type="entry name" value="DNAA"/>
    <property type="match status" value="1"/>
</dbReference>
<organism>
    <name type="scientific">Borreliella burgdorferi (strain ATCC 35210 / DSM 4680 / CIP 102532 / B31)</name>
    <name type="common">Borrelia burgdorferi</name>
    <dbReference type="NCBI Taxonomy" id="224326"/>
    <lineage>
        <taxon>Bacteria</taxon>
        <taxon>Pseudomonadati</taxon>
        <taxon>Spirochaetota</taxon>
        <taxon>Spirochaetia</taxon>
        <taxon>Spirochaetales</taxon>
        <taxon>Borreliaceae</taxon>
        <taxon>Borreliella</taxon>
    </lineage>
</organism>